<comment type="function">
    <text evidence="1">A translational regulator that binds mRNA to regulate translation initiation and/or mRNA stability. Usually binds in the 5'-UTR at or near the Shine-Dalgarno sequence preventing ribosome-binding, thus repressing translation. Its main target seems to be the major flagellin gene, while its function is anatagonized by FliW.</text>
</comment>
<comment type="subunit">
    <text evidence="1">Homodimer; the beta-strands of each monomer intercalate to form a hydrophobic core, while the alpha-helices form wings that extend away from the core.</text>
</comment>
<comment type="subcellular location">
    <subcellularLocation>
        <location evidence="1">Cytoplasm</location>
    </subcellularLocation>
</comment>
<comment type="similarity">
    <text evidence="1">Belongs to the CsrA/RsmA family.</text>
</comment>
<evidence type="ECO:0000255" key="1">
    <source>
        <dbReference type="HAMAP-Rule" id="MF_00167"/>
    </source>
</evidence>
<keyword id="KW-1005">Bacterial flagellum biogenesis</keyword>
<keyword id="KW-0963">Cytoplasm</keyword>
<keyword id="KW-1185">Reference proteome</keyword>
<keyword id="KW-0678">Repressor</keyword>
<keyword id="KW-0694">RNA-binding</keyword>
<keyword id="KW-0810">Translation regulation</keyword>
<name>CSRA_GEOUR</name>
<accession>A5G8X2</accession>
<proteinExistence type="inferred from homology"/>
<dbReference type="EMBL" id="CP000698">
    <property type="protein sequence ID" value="ABQ28240.1"/>
    <property type="molecule type" value="Genomic_DNA"/>
</dbReference>
<dbReference type="RefSeq" id="WP_011940876.1">
    <property type="nucleotide sequence ID" value="NC_009483.1"/>
</dbReference>
<dbReference type="SMR" id="A5G8X2"/>
<dbReference type="STRING" id="351605.Gura_4097"/>
<dbReference type="KEGG" id="gur:Gura_4097"/>
<dbReference type="HOGENOM" id="CLU_164837_0_2_7"/>
<dbReference type="OrthoDB" id="9809061at2"/>
<dbReference type="Proteomes" id="UP000006695">
    <property type="component" value="Chromosome"/>
</dbReference>
<dbReference type="GO" id="GO:0005829">
    <property type="term" value="C:cytosol"/>
    <property type="evidence" value="ECO:0007669"/>
    <property type="project" value="TreeGrafter"/>
</dbReference>
<dbReference type="GO" id="GO:0048027">
    <property type="term" value="F:mRNA 5'-UTR binding"/>
    <property type="evidence" value="ECO:0007669"/>
    <property type="project" value="UniProtKB-UniRule"/>
</dbReference>
<dbReference type="GO" id="GO:0044781">
    <property type="term" value="P:bacterial-type flagellum organization"/>
    <property type="evidence" value="ECO:0007669"/>
    <property type="project" value="UniProtKB-KW"/>
</dbReference>
<dbReference type="GO" id="GO:0006402">
    <property type="term" value="P:mRNA catabolic process"/>
    <property type="evidence" value="ECO:0007669"/>
    <property type="project" value="InterPro"/>
</dbReference>
<dbReference type="GO" id="GO:0045947">
    <property type="term" value="P:negative regulation of translational initiation"/>
    <property type="evidence" value="ECO:0007669"/>
    <property type="project" value="UniProtKB-UniRule"/>
</dbReference>
<dbReference type="GO" id="GO:1902208">
    <property type="term" value="P:regulation of bacterial-type flagellum assembly"/>
    <property type="evidence" value="ECO:0007669"/>
    <property type="project" value="UniProtKB-UniRule"/>
</dbReference>
<dbReference type="GO" id="GO:0006109">
    <property type="term" value="P:regulation of carbohydrate metabolic process"/>
    <property type="evidence" value="ECO:0007669"/>
    <property type="project" value="InterPro"/>
</dbReference>
<dbReference type="FunFam" id="2.60.40.4380:FF:000002">
    <property type="entry name" value="Translational regulator CsrA"/>
    <property type="match status" value="1"/>
</dbReference>
<dbReference type="Gene3D" id="2.60.40.4380">
    <property type="entry name" value="Translational regulator CsrA"/>
    <property type="match status" value="1"/>
</dbReference>
<dbReference type="HAMAP" id="MF_00167">
    <property type="entry name" value="CsrA"/>
    <property type="match status" value="1"/>
</dbReference>
<dbReference type="InterPro" id="IPR003751">
    <property type="entry name" value="CsrA"/>
</dbReference>
<dbReference type="InterPro" id="IPR036107">
    <property type="entry name" value="CsrA_sf"/>
</dbReference>
<dbReference type="NCBIfam" id="TIGR00202">
    <property type="entry name" value="csrA"/>
    <property type="match status" value="1"/>
</dbReference>
<dbReference type="NCBIfam" id="NF002469">
    <property type="entry name" value="PRK01712.1"/>
    <property type="match status" value="1"/>
</dbReference>
<dbReference type="PANTHER" id="PTHR34984">
    <property type="entry name" value="CARBON STORAGE REGULATOR"/>
    <property type="match status" value="1"/>
</dbReference>
<dbReference type="PANTHER" id="PTHR34984:SF1">
    <property type="entry name" value="CARBON STORAGE REGULATOR"/>
    <property type="match status" value="1"/>
</dbReference>
<dbReference type="Pfam" id="PF02599">
    <property type="entry name" value="CsrA"/>
    <property type="match status" value="1"/>
</dbReference>
<dbReference type="SUPFAM" id="SSF117130">
    <property type="entry name" value="CsrA-like"/>
    <property type="match status" value="1"/>
</dbReference>
<organism>
    <name type="scientific">Geotalea uraniireducens (strain Rf4)</name>
    <name type="common">Geobacter uraniireducens</name>
    <dbReference type="NCBI Taxonomy" id="351605"/>
    <lineage>
        <taxon>Bacteria</taxon>
        <taxon>Pseudomonadati</taxon>
        <taxon>Thermodesulfobacteriota</taxon>
        <taxon>Desulfuromonadia</taxon>
        <taxon>Geobacterales</taxon>
        <taxon>Geobacteraceae</taxon>
        <taxon>Geotalea</taxon>
    </lineage>
</organism>
<reference key="1">
    <citation type="submission" date="2007-05" db="EMBL/GenBank/DDBJ databases">
        <title>Complete sequence of Geobacter uraniireducens Rf4.</title>
        <authorList>
            <consortium name="US DOE Joint Genome Institute"/>
            <person name="Copeland A."/>
            <person name="Lucas S."/>
            <person name="Lapidus A."/>
            <person name="Barry K."/>
            <person name="Detter J.C."/>
            <person name="Glavina del Rio T."/>
            <person name="Hammon N."/>
            <person name="Israni S."/>
            <person name="Dalin E."/>
            <person name="Tice H."/>
            <person name="Pitluck S."/>
            <person name="Chertkov O."/>
            <person name="Brettin T."/>
            <person name="Bruce D."/>
            <person name="Han C."/>
            <person name="Schmutz J."/>
            <person name="Larimer F."/>
            <person name="Land M."/>
            <person name="Hauser L."/>
            <person name="Kyrpides N."/>
            <person name="Mikhailova N."/>
            <person name="Shelobolina E."/>
            <person name="Aklujkar M."/>
            <person name="Lovley D."/>
            <person name="Richardson P."/>
        </authorList>
    </citation>
    <scope>NUCLEOTIDE SEQUENCE [LARGE SCALE GENOMIC DNA]</scope>
    <source>
        <strain>ATCC BAA-1134 / JCM 13001 / Rf4</strain>
    </source>
</reference>
<protein>
    <recommendedName>
        <fullName evidence="1">Translational regulator CsrA</fullName>
    </recommendedName>
</protein>
<sequence>MLVLTRKIGEAVTIGDQIRIMVVEVKGNQVRLGIEAPQDMRIYREEIYLQVQEENRHAADWNLTDLENAVSLLGSGDKE</sequence>
<feature type="chain" id="PRO_1000076992" description="Translational regulator CsrA">
    <location>
        <begin position="1"/>
        <end position="79"/>
    </location>
</feature>
<gene>
    <name evidence="1" type="primary">csrA</name>
    <name type="ordered locus">Gura_4097</name>
</gene>